<comment type="function">
    <text evidence="1">DNA polymerase involved in damage-induced mutagenesis and translesion synthesis (TLS). It is not the major replicative DNA polymerase.</text>
</comment>
<comment type="catalytic activity">
    <reaction evidence="1">
        <text>DNA(n) + a 2'-deoxyribonucleoside 5'-triphosphate = DNA(n+1) + diphosphate</text>
        <dbReference type="Rhea" id="RHEA:22508"/>
        <dbReference type="Rhea" id="RHEA-COMP:17339"/>
        <dbReference type="Rhea" id="RHEA-COMP:17340"/>
        <dbReference type="ChEBI" id="CHEBI:33019"/>
        <dbReference type="ChEBI" id="CHEBI:61560"/>
        <dbReference type="ChEBI" id="CHEBI:173112"/>
        <dbReference type="EC" id="2.7.7.7"/>
    </reaction>
</comment>
<comment type="subcellular location">
    <subcellularLocation>
        <location evidence="1">Cytoplasm</location>
    </subcellularLocation>
</comment>
<comment type="similarity">
    <text evidence="1">Belongs to the DNA polymerase type-C family. DnaE2 subfamily.</text>
</comment>
<comment type="sequence caution" evidence="2">
    <conflict type="erroneous initiation">
        <sequence resource="EMBL-CDS" id="AAY50192"/>
    </conflict>
</comment>
<name>DNAE2_XANC8</name>
<evidence type="ECO:0000255" key="1">
    <source>
        <dbReference type="HAMAP-Rule" id="MF_01902"/>
    </source>
</evidence>
<evidence type="ECO:0000305" key="2"/>
<protein>
    <recommendedName>
        <fullName evidence="1">Error-prone DNA polymerase</fullName>
        <ecNumber evidence="1">2.7.7.7</ecNumber>
    </recommendedName>
</protein>
<gene>
    <name evidence="1" type="primary">dnaE2</name>
    <name type="ordered locus">XC_3148</name>
</gene>
<proteinExistence type="inferred from homology"/>
<feature type="chain" id="PRO_0000103406" description="Error-prone DNA polymerase">
    <location>
        <begin position="1"/>
        <end position="1082"/>
    </location>
</feature>
<sequence length="1082" mass="120079">MSWDDAIDGVDRDTPGGRMPRGWTVAARLRAANDDITHAAVADTLPAYAELHCLSDFSFLRGASSAEQLFARAHHCGYSALAITDECSLAGIVRGLEASRATGVQLIVGSEFTLVDGTRFVLLVENAHGYPQLCSVITTGRRAAGKGAYRLGRAEVEAHFRDVVPGVFALWLPGDQPQAEQGAWLQRVFAERAFLAVELHREQDDAARLQALQALAQQLGMSALASGDVQMAQRRDRIVQDTLTAIRHTLPLADCGAHLFRNGERHLRPRRALGNIYPHALLQASVELAQRCTFDLSKVQYTYPRELVPQGHTPASYLRQLTEAGMRERWPEGAPAQVVAQIDSELELIAYKGYEAFFLTVQDVVRFARAQGILCQGRGSSANSAVCYALGITAVNPSETRLLMARFLSKERDEPPDIDVDFEHERREEVLQYVYTKYGRERAALAATVICYRGKSAVRDVAKAFGLPPDQIALLANCYGWGNGDTPMEQRIAEAGFDLANPLINKILAVTEHLRDHPRHLSQHVGGFVISDEPLSMLVPVENAAMADRTIIQWDKDDLETMKLLKVDCLALGMLTCIRKTLDLVRGHRGRDYTIATLPGEDAATYKMIQRADTVGVFQIESRAQMAMLPRLKPREFYDLVIEVAIVRPGPIQGDMVHPYLRRRQGYEPVSFPSPGVEEILGRTLGIPLFQEQVMELVIHAGYTDSEADQLRRSMAAWRRGGDMEPHRVRIRELMAGRGYAPEFIDQIFEQIKGFGSYGFPQSHAASFAKLVYASCWLKRHEPAAFACGLLNAQPMGFYSASQIVQDARRGSPERQRVEVLPVDVLHSDWDNILVGGRPWHSDADPGEQPAIRLGLRQVSGLSEKVVERIVAARAQRPFADIGDLCLRAALDEKARLALAEAGALQSMVGNRNAARWAMAGVEARRPLLPGSPAERAVELPAPRAGEEILADYRAVGLSLRQHPMALLRPQMLQRRILGLRELQARRHGSGVHVAGLVTQRQRPATAKGTIFVTLEDEHGMINVIVWSHLAMRRRRALLESRLLAVRGRWERVDGVEHLIAGDLYDLSDLLGEMQLPSRDFH</sequence>
<organism>
    <name type="scientific">Xanthomonas campestris pv. campestris (strain 8004)</name>
    <dbReference type="NCBI Taxonomy" id="314565"/>
    <lineage>
        <taxon>Bacteria</taxon>
        <taxon>Pseudomonadati</taxon>
        <taxon>Pseudomonadota</taxon>
        <taxon>Gammaproteobacteria</taxon>
        <taxon>Lysobacterales</taxon>
        <taxon>Lysobacteraceae</taxon>
        <taxon>Xanthomonas</taxon>
    </lineage>
</organism>
<accession>Q4URY1</accession>
<reference key="1">
    <citation type="journal article" date="2005" name="Genome Res.">
        <title>Comparative and functional genomic analyses of the pathogenicity of phytopathogen Xanthomonas campestris pv. campestris.</title>
        <authorList>
            <person name="Qian W."/>
            <person name="Jia Y."/>
            <person name="Ren S.-X."/>
            <person name="He Y.-Q."/>
            <person name="Feng J.-X."/>
            <person name="Lu L.-F."/>
            <person name="Sun Q."/>
            <person name="Ying G."/>
            <person name="Tang D.-J."/>
            <person name="Tang H."/>
            <person name="Wu W."/>
            <person name="Hao P."/>
            <person name="Wang L."/>
            <person name="Jiang B.-L."/>
            <person name="Zeng S."/>
            <person name="Gu W.-Y."/>
            <person name="Lu G."/>
            <person name="Rong L."/>
            <person name="Tian Y."/>
            <person name="Yao Z."/>
            <person name="Fu G."/>
            <person name="Chen B."/>
            <person name="Fang R."/>
            <person name="Qiang B."/>
            <person name="Chen Z."/>
            <person name="Zhao G.-P."/>
            <person name="Tang J.-L."/>
            <person name="He C."/>
        </authorList>
    </citation>
    <scope>NUCLEOTIDE SEQUENCE [LARGE SCALE GENOMIC DNA]</scope>
    <source>
        <strain>8004</strain>
    </source>
</reference>
<keyword id="KW-0963">Cytoplasm</keyword>
<keyword id="KW-0227">DNA damage</keyword>
<keyword id="KW-0234">DNA repair</keyword>
<keyword id="KW-0235">DNA replication</keyword>
<keyword id="KW-0239">DNA-directed DNA polymerase</keyword>
<keyword id="KW-0548">Nucleotidyltransferase</keyword>
<keyword id="KW-0808">Transferase</keyword>
<dbReference type="EC" id="2.7.7.7" evidence="1"/>
<dbReference type="EMBL" id="CP000050">
    <property type="protein sequence ID" value="AAY50192.1"/>
    <property type="status" value="ALT_INIT"/>
    <property type="molecule type" value="Genomic_DNA"/>
</dbReference>
<dbReference type="RefSeq" id="WP_019237880.1">
    <property type="nucleotide sequence ID" value="NZ_CP155948.1"/>
</dbReference>
<dbReference type="SMR" id="Q4URY1"/>
<dbReference type="KEGG" id="xcb:XC_3148"/>
<dbReference type="HOGENOM" id="CLU_001600_4_0_6"/>
<dbReference type="Proteomes" id="UP000000420">
    <property type="component" value="Chromosome"/>
</dbReference>
<dbReference type="GO" id="GO:0005737">
    <property type="term" value="C:cytoplasm"/>
    <property type="evidence" value="ECO:0007669"/>
    <property type="project" value="UniProtKB-SubCell"/>
</dbReference>
<dbReference type="GO" id="GO:0008408">
    <property type="term" value="F:3'-5' exonuclease activity"/>
    <property type="evidence" value="ECO:0007669"/>
    <property type="project" value="InterPro"/>
</dbReference>
<dbReference type="GO" id="GO:0003887">
    <property type="term" value="F:DNA-directed DNA polymerase activity"/>
    <property type="evidence" value="ECO:0007669"/>
    <property type="project" value="UniProtKB-UniRule"/>
</dbReference>
<dbReference type="GO" id="GO:0003676">
    <property type="term" value="F:nucleic acid binding"/>
    <property type="evidence" value="ECO:0007669"/>
    <property type="project" value="InterPro"/>
</dbReference>
<dbReference type="GO" id="GO:0006281">
    <property type="term" value="P:DNA repair"/>
    <property type="evidence" value="ECO:0007669"/>
    <property type="project" value="UniProtKB-UniRule"/>
</dbReference>
<dbReference type="GO" id="GO:0006260">
    <property type="term" value="P:DNA replication"/>
    <property type="evidence" value="ECO:0007669"/>
    <property type="project" value="UniProtKB-KW"/>
</dbReference>
<dbReference type="CDD" id="cd04485">
    <property type="entry name" value="DnaE_OBF"/>
    <property type="match status" value="1"/>
</dbReference>
<dbReference type="CDD" id="cd07434">
    <property type="entry name" value="PHP_PolIIIA_DnaE2"/>
    <property type="match status" value="1"/>
</dbReference>
<dbReference type="Gene3D" id="1.10.150.870">
    <property type="match status" value="1"/>
</dbReference>
<dbReference type="Gene3D" id="3.20.20.140">
    <property type="entry name" value="Metal-dependent hydrolases"/>
    <property type="match status" value="1"/>
</dbReference>
<dbReference type="HAMAP" id="MF_01902">
    <property type="entry name" value="DNApol_error_prone"/>
    <property type="match status" value="1"/>
</dbReference>
<dbReference type="InterPro" id="IPR011708">
    <property type="entry name" value="DNA_pol3_alpha_NTPase_dom"/>
</dbReference>
<dbReference type="InterPro" id="IPR040982">
    <property type="entry name" value="DNA_pol3_finger"/>
</dbReference>
<dbReference type="InterPro" id="IPR023073">
    <property type="entry name" value="DnaE2"/>
</dbReference>
<dbReference type="InterPro" id="IPR004805">
    <property type="entry name" value="DnaE2/DnaE/PolC"/>
</dbReference>
<dbReference type="InterPro" id="IPR029460">
    <property type="entry name" value="DNAPol_HHH"/>
</dbReference>
<dbReference type="InterPro" id="IPR004365">
    <property type="entry name" value="NA-bd_OB_tRNA"/>
</dbReference>
<dbReference type="InterPro" id="IPR004013">
    <property type="entry name" value="PHP_dom"/>
</dbReference>
<dbReference type="InterPro" id="IPR003141">
    <property type="entry name" value="Pol/His_phosphatase_N"/>
</dbReference>
<dbReference type="InterPro" id="IPR016195">
    <property type="entry name" value="Pol/histidinol_Pase-like"/>
</dbReference>
<dbReference type="NCBIfam" id="TIGR00594">
    <property type="entry name" value="polc"/>
    <property type="match status" value="1"/>
</dbReference>
<dbReference type="NCBIfam" id="NF004225">
    <property type="entry name" value="PRK05672.1"/>
    <property type="match status" value="1"/>
</dbReference>
<dbReference type="PANTHER" id="PTHR32294">
    <property type="entry name" value="DNA POLYMERASE III SUBUNIT ALPHA"/>
    <property type="match status" value="1"/>
</dbReference>
<dbReference type="PANTHER" id="PTHR32294:SF4">
    <property type="entry name" value="ERROR-PRONE DNA POLYMERASE"/>
    <property type="match status" value="1"/>
</dbReference>
<dbReference type="Pfam" id="PF07733">
    <property type="entry name" value="DNA_pol3_alpha"/>
    <property type="match status" value="1"/>
</dbReference>
<dbReference type="Pfam" id="PF17657">
    <property type="entry name" value="DNA_pol3_finger"/>
    <property type="match status" value="1"/>
</dbReference>
<dbReference type="Pfam" id="PF14579">
    <property type="entry name" value="HHH_6"/>
    <property type="match status" value="1"/>
</dbReference>
<dbReference type="Pfam" id="PF02811">
    <property type="entry name" value="PHP"/>
    <property type="match status" value="1"/>
</dbReference>
<dbReference type="Pfam" id="PF01336">
    <property type="entry name" value="tRNA_anti-codon"/>
    <property type="match status" value="1"/>
</dbReference>
<dbReference type="SMART" id="SM00481">
    <property type="entry name" value="POLIIIAc"/>
    <property type="match status" value="1"/>
</dbReference>
<dbReference type="SUPFAM" id="SSF89550">
    <property type="entry name" value="PHP domain-like"/>
    <property type="match status" value="1"/>
</dbReference>